<keyword id="KW-1003">Cell membrane</keyword>
<keyword id="KW-0325">Glycoprotein</keyword>
<keyword id="KW-0328">Glycosyltransferase</keyword>
<keyword id="KW-0472">Membrane</keyword>
<keyword id="KW-1185">Reference proteome</keyword>
<keyword id="KW-0808">Transferase</keyword>
<keyword id="KW-0812">Transmembrane</keyword>
<keyword id="KW-1133">Transmembrane helix</keyword>
<keyword id="KW-0843">Virulence</keyword>
<feature type="chain" id="PRO_0000460803" description="Chitin synthase 4">
    <location>
        <begin position="1"/>
        <end position="1222"/>
    </location>
</feature>
<feature type="transmembrane region" description="Helical" evidence="1">
    <location>
        <begin position="204"/>
        <end position="224"/>
    </location>
</feature>
<feature type="transmembrane region" description="Helical" evidence="1">
    <location>
        <begin position="242"/>
        <end position="262"/>
    </location>
</feature>
<feature type="transmembrane region" description="Helical" evidence="1">
    <location>
        <begin position="509"/>
        <end position="529"/>
    </location>
</feature>
<feature type="transmembrane region" description="Helical" evidence="1">
    <location>
        <begin position="1056"/>
        <end position="1076"/>
    </location>
</feature>
<feature type="transmembrane region" description="Helical" evidence="1">
    <location>
        <begin position="1090"/>
        <end position="1110"/>
    </location>
</feature>
<feature type="transmembrane region" description="Helical" evidence="1">
    <location>
        <begin position="1116"/>
        <end position="1136"/>
    </location>
</feature>
<feature type="region of interest" description="Disordered" evidence="3">
    <location>
        <begin position="1"/>
        <end position="108"/>
    </location>
</feature>
<feature type="region of interest" description="Disordered" evidence="3">
    <location>
        <begin position="136"/>
        <end position="199"/>
    </location>
</feature>
<feature type="region of interest" description="Disordered" evidence="3">
    <location>
        <begin position="595"/>
        <end position="662"/>
    </location>
</feature>
<feature type="region of interest" description="Disordered" evidence="3">
    <location>
        <begin position="1201"/>
        <end position="1222"/>
    </location>
</feature>
<feature type="compositionally biased region" description="Polar residues" evidence="3">
    <location>
        <begin position="51"/>
        <end position="68"/>
    </location>
</feature>
<feature type="compositionally biased region" description="Basic and acidic residues" evidence="3">
    <location>
        <begin position="94"/>
        <end position="107"/>
    </location>
</feature>
<feature type="compositionally biased region" description="Polar residues" evidence="3">
    <location>
        <begin position="137"/>
        <end position="154"/>
    </location>
</feature>
<feature type="compositionally biased region" description="Basic residues" evidence="3">
    <location>
        <begin position="176"/>
        <end position="196"/>
    </location>
</feature>
<feature type="compositionally biased region" description="Polar residues" evidence="3">
    <location>
        <begin position="608"/>
        <end position="643"/>
    </location>
</feature>
<feature type="compositionally biased region" description="Basic and acidic residues" evidence="3">
    <location>
        <begin position="1213"/>
        <end position="1222"/>
    </location>
</feature>
<feature type="glycosylation site" description="N-linked (GlcNAc...) asparagine" evidence="2">
    <location>
        <position position="64"/>
    </location>
</feature>
<feature type="glycosylation site" description="N-linked (GlcNAc...) asparagine" evidence="2">
    <location>
        <position position="116"/>
    </location>
</feature>
<feature type="glycosylation site" description="N-linked (GlcNAc...) asparagine" evidence="2">
    <location>
        <position position="378"/>
    </location>
</feature>
<feature type="glycosylation site" description="N-linked (GlcNAc...) asparagine" evidence="2">
    <location>
        <position position="418"/>
    </location>
</feature>
<feature type="glycosylation site" description="N-linked (GlcNAc...) asparagine" evidence="2">
    <location>
        <position position="636"/>
    </location>
</feature>
<feature type="glycosylation site" description="N-linked (GlcNAc...) asparagine" evidence="2">
    <location>
        <position position="1031"/>
    </location>
</feature>
<proteinExistence type="inferred from homology"/>
<accession>G2WYP9</accession>
<sequence>MSLPERPGGISSEHRNAYRQSQSRRHRPADIEASSYYPVEGGRSSRHQPGLSANSFAETIPSPNNSFVENMPLSPTGERPAAPDQPFQRKRSLIRPERNRIDKDHPNYHYRKHAANMSTMPSATGNDPIAEDIEATTDVSGSRSQTLDGVSDTSPPRGHGSRPNSGEQEKKAPRSSAKRVSRHKSGKITKSTKKRSTPQEVIRPPSFWNVYCAIITFWCPDFMLKCFGMRSRAEQRAWREKMGLISLILLIMGCVGFITFGFTAVVCGSPPLRMRVNKVSDGYMIFHGTAYDLTRSGHPPAEGIPVPRGQRGANILWGMPGVDNRGKDGSFLFQNVNGRCKGLIEAAPNSEVPTNANGDLAWYFPCTTFNQDGKSEPNFTTPYYTGYSCHTSEKSRNAFYIDLKKSADVYFTWDDIKNSSRNLIVYSGNVLDLDLLHWFDSRQVTIPQRFEELRDTNTAANKAFRGRDVTRPFQSNGDKEIAECFEEIIKVGSIDTVTVGCIASRVVLYVFLALILSVVGSRFVLALIFQWFISRNYAAAKTSQSSDKRKRNQQIEDWSNDIYQAPARITGDIGSSVVTSDRSSKRGSTFMTTSRFSTVYGPDRGSSNKRVPTTMASSGGSGSQLLHPNSMYRQGNDSRSSFLRSDPYASNVPPSDGPGPAGFIHEAVVPQPPADWMPYGFPLAHTICLVTAYSEGAMGIRTTFDSIATTDYPNSHKVIIAICDGIIKGHGEEMATPDYVLAMMKDQTMAPEDVQPFSYVAVASGSKRHNMAKVYCGFYDYGAKSAIPVDKQQRVPMMLVVKCGTPDEATKSKPGNRGKRDSQIILMSFLQKIMFDERMTELEYEMFNGLWKVTGISPDFYECVLMVDADTKVFPDSLTHMLSAMVKDPEIMGLCGETKIANKRDSWVSAIQVFEYFISHHLAKSFESVFGGVTCLPGCFCMYRIKAPKGAQNYWVPILANPDVVEHYSENVVDTLHKKNLLLLGEDRYLSTLMLRTFPKRKQVFVPQAVCKTTVPDTFMVLLSQRRRWINSTIHNLMELVLVRDLCGTFCFSMQFIVFVELMGTLVLPAAIAFTFYVVIMSIVSKPVQVIPLILLALILGLPAVLIVITAHSWSYLVWMMIYLFSLPVWNFVLPVYAFWKFDDFSWGDTRKTAGETTKKAGLEYEGEFDSSKITMKRWAEFERERRSKANYWGSKENVVGGGNSWSMPPGHQYHDDYYSDA</sequence>
<dbReference type="EC" id="2.4.1.16" evidence="7"/>
<dbReference type="EMBL" id="DS572699">
    <property type="protein sequence ID" value="EGY21701.1"/>
    <property type="molecule type" value="Genomic_DNA"/>
</dbReference>
<dbReference type="RefSeq" id="XP_009655301.1">
    <property type="nucleotide sequence ID" value="XM_009657006.1"/>
</dbReference>
<dbReference type="FunCoup" id="G2WYP9">
    <property type="interactions" value="73"/>
</dbReference>
<dbReference type="STRING" id="498257.G2WYP9"/>
<dbReference type="EnsemblFungi" id="EGY21701">
    <property type="protein sequence ID" value="EGY21701"/>
    <property type="gene ID" value="VDAG_03141"/>
</dbReference>
<dbReference type="GeneID" id="20704604"/>
<dbReference type="KEGG" id="vda:VDAG_03141"/>
<dbReference type="eggNOG" id="KOG2571">
    <property type="taxonomic scope" value="Eukaryota"/>
</dbReference>
<dbReference type="HOGENOM" id="CLU_002572_1_0_1"/>
<dbReference type="InParanoid" id="G2WYP9"/>
<dbReference type="OMA" id="DIMGLCG"/>
<dbReference type="OrthoDB" id="9939at1028384"/>
<dbReference type="PHI-base" id="PHI:123306"/>
<dbReference type="Proteomes" id="UP000001611">
    <property type="component" value="Chromosome 6"/>
</dbReference>
<dbReference type="GO" id="GO:0030428">
    <property type="term" value="C:cell septum"/>
    <property type="evidence" value="ECO:0007669"/>
    <property type="project" value="TreeGrafter"/>
</dbReference>
<dbReference type="GO" id="GO:0005935">
    <property type="term" value="C:cellular bud neck"/>
    <property type="evidence" value="ECO:0007669"/>
    <property type="project" value="EnsemblFungi"/>
</dbReference>
<dbReference type="GO" id="GO:0045009">
    <property type="term" value="C:chitosome"/>
    <property type="evidence" value="ECO:0007669"/>
    <property type="project" value="EnsemblFungi"/>
</dbReference>
<dbReference type="GO" id="GO:0000131">
    <property type="term" value="C:incipient cellular bud site"/>
    <property type="evidence" value="ECO:0007669"/>
    <property type="project" value="EnsemblFungi"/>
</dbReference>
<dbReference type="GO" id="GO:0005886">
    <property type="term" value="C:plasma membrane"/>
    <property type="evidence" value="ECO:0007669"/>
    <property type="project" value="UniProtKB-SubCell"/>
</dbReference>
<dbReference type="GO" id="GO:0005628">
    <property type="term" value="C:prospore membrane"/>
    <property type="evidence" value="ECO:0007669"/>
    <property type="project" value="EnsemblFungi"/>
</dbReference>
<dbReference type="GO" id="GO:0004100">
    <property type="term" value="F:chitin synthase activity"/>
    <property type="evidence" value="ECO:0007669"/>
    <property type="project" value="UniProtKB-EC"/>
</dbReference>
<dbReference type="GO" id="GO:0030476">
    <property type="term" value="P:ascospore wall assembly"/>
    <property type="evidence" value="ECO:0007669"/>
    <property type="project" value="EnsemblFungi"/>
</dbReference>
<dbReference type="GO" id="GO:0006031">
    <property type="term" value="P:chitin biosynthetic process"/>
    <property type="evidence" value="ECO:0007669"/>
    <property type="project" value="EnsemblFungi"/>
</dbReference>
<dbReference type="GO" id="GO:0097271">
    <property type="term" value="P:protein localization to bud neck"/>
    <property type="evidence" value="ECO:0007669"/>
    <property type="project" value="EnsemblFungi"/>
</dbReference>
<dbReference type="CDD" id="cd04190">
    <property type="entry name" value="Chitin_synth_C"/>
    <property type="match status" value="1"/>
</dbReference>
<dbReference type="Gene3D" id="3.90.550.10">
    <property type="entry name" value="Spore Coat Polysaccharide Biosynthesis Protein SpsA, Chain A"/>
    <property type="match status" value="1"/>
</dbReference>
<dbReference type="InterPro" id="IPR004835">
    <property type="entry name" value="Chitin_synth"/>
</dbReference>
<dbReference type="InterPro" id="IPR054295">
    <property type="entry name" value="CHS4-like_dom"/>
</dbReference>
<dbReference type="InterPro" id="IPR001199">
    <property type="entry name" value="Cyt_B5-like_heme/steroid-bd"/>
</dbReference>
<dbReference type="InterPro" id="IPR029044">
    <property type="entry name" value="Nucleotide-diphossugar_trans"/>
</dbReference>
<dbReference type="PANTHER" id="PTHR22914">
    <property type="entry name" value="CHITIN SYNTHASE"/>
    <property type="match status" value="1"/>
</dbReference>
<dbReference type="PANTHER" id="PTHR22914:SF16">
    <property type="entry name" value="CHITIN SYNTHASE 3"/>
    <property type="match status" value="1"/>
</dbReference>
<dbReference type="Pfam" id="PF03142">
    <property type="entry name" value="Chitin_synth_2"/>
    <property type="match status" value="1"/>
</dbReference>
<dbReference type="Pfam" id="PF22997">
    <property type="entry name" value="CHS4"/>
    <property type="match status" value="1"/>
</dbReference>
<dbReference type="SMART" id="SM01117">
    <property type="entry name" value="Cyt-b5"/>
    <property type="match status" value="1"/>
</dbReference>
<dbReference type="SUPFAM" id="SSF53448">
    <property type="entry name" value="Nucleotide-diphospho-sugar transferases"/>
    <property type="match status" value="1"/>
</dbReference>
<gene>
    <name evidence="5" type="primary">CHS4</name>
    <name type="ORF">VDAG_03141</name>
</gene>
<name>CHS4_VERDV</name>
<reference key="1">
    <citation type="journal article" date="2011" name="PLoS Pathog.">
        <title>Comparative genomics yields insights into niche adaptation of plant vascular wilt pathogens.</title>
        <authorList>
            <person name="Klosterman S.J."/>
            <person name="Subbarao K.V."/>
            <person name="Kang S."/>
            <person name="Veronese P."/>
            <person name="Gold S.E."/>
            <person name="Thomma B.P.H.J."/>
            <person name="Chen Z."/>
            <person name="Henrissat B."/>
            <person name="Lee Y.-H."/>
            <person name="Park J."/>
            <person name="Garcia-Pedrajas M.D."/>
            <person name="Barbara D.J."/>
            <person name="Anchieta A."/>
            <person name="de Jonge R."/>
            <person name="Santhanam P."/>
            <person name="Maruthachalam K."/>
            <person name="Atallah Z."/>
            <person name="Amyotte S.G."/>
            <person name="Paz Z."/>
            <person name="Inderbitzin P."/>
            <person name="Hayes R.J."/>
            <person name="Heiman D.I."/>
            <person name="Young S."/>
            <person name="Zeng Q."/>
            <person name="Engels R."/>
            <person name="Galagan J."/>
            <person name="Cuomo C.A."/>
            <person name="Dobinson K.F."/>
            <person name="Ma L.-J."/>
        </authorList>
    </citation>
    <scope>NUCLEOTIDE SEQUENCE [LARGE SCALE GENOMIC DNA]</scope>
    <source>
        <strain>VdLs.17 / ATCC MYA-4575 / FGSC 10137</strain>
    </source>
</reference>
<reference key="2">
    <citation type="journal article" date="2022" name="J. Fungi">
        <title>Chitin Synthase Genes Are Differentially Required for Growth, Stress Response, and Virulence in Verticillium dahliae.</title>
        <authorList>
            <person name="Qin J."/>
            <person name="Zhao P."/>
            <person name="Ye Z."/>
            <person name="Sun L."/>
            <person name="Hu X."/>
            <person name="Zhang J."/>
        </authorList>
    </citation>
    <scope>FUNCTION</scope>
    <scope>DISRUPTION PHENOTYPE</scope>
</reference>
<organism>
    <name type="scientific">Verticillium dahliae (strain VdLs.17 / ATCC MYA-4575 / FGSC 10137)</name>
    <name type="common">Verticillium wilt</name>
    <dbReference type="NCBI Taxonomy" id="498257"/>
    <lineage>
        <taxon>Eukaryota</taxon>
        <taxon>Fungi</taxon>
        <taxon>Dikarya</taxon>
        <taxon>Ascomycota</taxon>
        <taxon>Pezizomycotina</taxon>
        <taxon>Sordariomycetes</taxon>
        <taxon>Hypocreomycetidae</taxon>
        <taxon>Glomerellales</taxon>
        <taxon>Plectosphaerellaceae</taxon>
        <taxon>Verticillium</taxon>
    </lineage>
</organism>
<evidence type="ECO:0000255" key="1"/>
<evidence type="ECO:0000255" key="2">
    <source>
        <dbReference type="PROSITE-ProRule" id="PRU00498"/>
    </source>
</evidence>
<evidence type="ECO:0000256" key="3">
    <source>
        <dbReference type="SAM" id="MobiDB-lite"/>
    </source>
</evidence>
<evidence type="ECO:0000269" key="4">
    <source>
    </source>
</evidence>
<evidence type="ECO:0000303" key="5">
    <source>
    </source>
</evidence>
<evidence type="ECO:0000305" key="6"/>
<evidence type="ECO:0000305" key="7">
    <source>
    </source>
</evidence>
<comment type="function">
    <text evidence="4 7">Polymerizes chitin, a structural polymer of the cell wall and septum, by transferring the sugar moiety of UDP-GlcNAc to the non-reducing end of the growing chitin polymer (Probable). Plays a role in cell wall integrity and is involved in tolerance to hyperosmotic conditions (PubMed:35887437). Required to successfully penetrate the host plants and thus plays a key role in pathogenicity (PubMed:35887437).</text>
</comment>
<comment type="catalytic activity">
    <reaction evidence="7">
        <text>[(1-&gt;4)-N-acetyl-beta-D-glucosaminyl](n) + UDP-N-acetyl-alpha-D-glucosamine = [(1-&gt;4)-N-acetyl-beta-D-glucosaminyl](n+1) + UDP + H(+)</text>
        <dbReference type="Rhea" id="RHEA:16637"/>
        <dbReference type="Rhea" id="RHEA-COMP:9593"/>
        <dbReference type="Rhea" id="RHEA-COMP:9595"/>
        <dbReference type="ChEBI" id="CHEBI:15378"/>
        <dbReference type="ChEBI" id="CHEBI:17029"/>
        <dbReference type="ChEBI" id="CHEBI:57705"/>
        <dbReference type="ChEBI" id="CHEBI:58223"/>
        <dbReference type="EC" id="2.4.1.16"/>
    </reaction>
    <physiologicalReaction direction="left-to-right" evidence="7">
        <dbReference type="Rhea" id="RHEA:16638"/>
    </physiologicalReaction>
</comment>
<comment type="subcellular location">
    <subcellularLocation>
        <location evidence="6">Cell membrane</location>
        <topology evidence="1">Multi-pass membrane protein</topology>
    </subcellularLocation>
</comment>
<comment type="disruption phenotype">
    <text evidence="4">Significantly impairs conidiation (PubMed:35887437). Impairs penetration in host plants and exhibits a significant reduced pathogenicity in Arabidopsis and cotton plants (PubMed:35887437).</text>
</comment>
<comment type="similarity">
    <text evidence="6">Belongs to the chitin synthase family. Class IV subfamily.</text>
</comment>
<protein>
    <recommendedName>
        <fullName evidence="5">Chitin synthase 4</fullName>
        <ecNumber evidence="7">2.4.1.16</ecNumber>
    </recommendedName>
    <alternativeName>
        <fullName evidence="6">Chitin-UDP acetyl-glucosaminyl transferase 4</fullName>
    </alternativeName>
    <alternativeName>
        <fullName evidence="6">Class-IV chitin synthase 4</fullName>
    </alternativeName>
</protein>